<comment type="subcellular location">
    <subcellularLocation>
        <location evidence="3">Cytoplasm</location>
    </subcellularLocation>
</comment>
<comment type="alternative products">
    <event type="alternative splicing"/>
    <isoform>
        <id>Q9LZ98-1</id>
        <name>1</name>
        <sequence type="displayed"/>
    </isoform>
    <text>A number of isoforms are produced. According to EST sequences.</text>
</comment>
<comment type="induction">
    <text evidence="3">By sucrose.</text>
</comment>
<comment type="similarity">
    <text evidence="4">Belongs to the ABC transporter superfamily. ABCI family.</text>
</comment>
<evidence type="ECO:0000255" key="1">
    <source>
        <dbReference type="PROSITE-ProRule" id="PRU00434"/>
    </source>
</evidence>
<evidence type="ECO:0000256" key="2">
    <source>
        <dbReference type="SAM" id="MobiDB-lite"/>
    </source>
</evidence>
<evidence type="ECO:0000269" key="3">
    <source ref="6"/>
</evidence>
<evidence type="ECO:0000305" key="4"/>
<dbReference type="EMBL" id="AL162874">
    <property type="protein sequence ID" value="CAB85532.1"/>
    <property type="molecule type" value="Genomic_DNA"/>
</dbReference>
<dbReference type="EMBL" id="CP002688">
    <property type="protein sequence ID" value="AED90452.1"/>
    <property type="molecule type" value="Genomic_DNA"/>
</dbReference>
<dbReference type="EMBL" id="AF370554">
    <property type="protein sequence ID" value="AAK48981.1"/>
    <property type="molecule type" value="mRNA"/>
</dbReference>
<dbReference type="EMBL" id="BT008725">
    <property type="protein sequence ID" value="AAP42738.1"/>
    <property type="molecule type" value="mRNA"/>
</dbReference>
<dbReference type="EMBL" id="AY086132">
    <property type="protein sequence ID" value="AAM63337.1"/>
    <property type="molecule type" value="mRNA"/>
</dbReference>
<dbReference type="PIR" id="T48248">
    <property type="entry name" value="T48248"/>
</dbReference>
<dbReference type="RefSeq" id="NP_195847.1">
    <molecule id="Q9LZ98-1"/>
    <property type="nucleotide sequence ID" value="NM_120305.3"/>
</dbReference>
<dbReference type="SMR" id="Q9LZ98"/>
<dbReference type="BioGRID" id="16985">
    <property type="interactions" value="1"/>
</dbReference>
<dbReference type="FunCoup" id="Q9LZ98">
    <property type="interactions" value="292"/>
</dbReference>
<dbReference type="IntAct" id="Q9LZ98">
    <property type="interactions" value="1"/>
</dbReference>
<dbReference type="STRING" id="3702.Q9LZ98"/>
<dbReference type="PaxDb" id="3702-AT5G02270.2"/>
<dbReference type="ProteomicsDB" id="244530">
    <molecule id="Q9LZ98-1"/>
</dbReference>
<dbReference type="EnsemblPlants" id="AT5G02270.1">
    <molecule id="Q9LZ98-1"/>
    <property type="protein sequence ID" value="AT5G02270.1"/>
    <property type="gene ID" value="AT5G02270"/>
</dbReference>
<dbReference type="GeneID" id="831709"/>
<dbReference type="Gramene" id="AT5G02270.1">
    <molecule id="Q9LZ98-1"/>
    <property type="protein sequence ID" value="AT5G02270.1"/>
    <property type="gene ID" value="AT5G02270"/>
</dbReference>
<dbReference type="KEGG" id="ath:AT5G02270"/>
<dbReference type="Araport" id="AT5G02270"/>
<dbReference type="TAIR" id="AT5G02270">
    <property type="gene designation" value="ABCI20"/>
</dbReference>
<dbReference type="eggNOG" id="KOG2355">
    <property type="taxonomic scope" value="Eukaryota"/>
</dbReference>
<dbReference type="InParanoid" id="Q9LZ98"/>
<dbReference type="OMA" id="MRTVEQW"/>
<dbReference type="OrthoDB" id="6512918at2759"/>
<dbReference type="PhylomeDB" id="Q9LZ98"/>
<dbReference type="PRO" id="PR:Q9LZ98"/>
<dbReference type="Proteomes" id="UP000006548">
    <property type="component" value="Chromosome 5"/>
</dbReference>
<dbReference type="ExpressionAtlas" id="Q9LZ98">
    <property type="expression patterns" value="baseline and differential"/>
</dbReference>
<dbReference type="GO" id="GO:0005737">
    <property type="term" value="C:cytoplasm"/>
    <property type="evidence" value="ECO:0007669"/>
    <property type="project" value="UniProtKB-SubCell"/>
</dbReference>
<dbReference type="GO" id="GO:0005524">
    <property type="term" value="F:ATP binding"/>
    <property type="evidence" value="ECO:0007669"/>
    <property type="project" value="UniProtKB-KW"/>
</dbReference>
<dbReference type="GO" id="GO:0016887">
    <property type="term" value="F:ATP hydrolysis activity"/>
    <property type="evidence" value="ECO:0007669"/>
    <property type="project" value="InterPro"/>
</dbReference>
<dbReference type="FunFam" id="3.40.50.300:FF:001930">
    <property type="entry name" value="ABC ATPase"/>
    <property type="match status" value="1"/>
</dbReference>
<dbReference type="Gene3D" id="3.40.50.300">
    <property type="entry name" value="P-loop containing nucleotide triphosphate hydrolases"/>
    <property type="match status" value="1"/>
</dbReference>
<dbReference type="InterPro" id="IPR003593">
    <property type="entry name" value="AAA+_ATPase"/>
</dbReference>
<dbReference type="InterPro" id="IPR003439">
    <property type="entry name" value="ABC_transporter-like_ATP-bd"/>
</dbReference>
<dbReference type="InterPro" id="IPR027417">
    <property type="entry name" value="P-loop_NTPase"/>
</dbReference>
<dbReference type="PANTHER" id="PTHR43158:SF12">
    <property type="entry name" value="ABC TRANSPORTER FAMILY PROTEIN"/>
    <property type="match status" value="1"/>
</dbReference>
<dbReference type="PANTHER" id="PTHR43158">
    <property type="entry name" value="SKFA PEPTIDE EXPORT ATP-BINDING PROTEIN SKFE"/>
    <property type="match status" value="1"/>
</dbReference>
<dbReference type="Pfam" id="PF00005">
    <property type="entry name" value="ABC_tran"/>
    <property type="match status" value="1"/>
</dbReference>
<dbReference type="SMART" id="SM00382">
    <property type="entry name" value="AAA"/>
    <property type="match status" value="1"/>
</dbReference>
<dbReference type="SUPFAM" id="SSF52540">
    <property type="entry name" value="P-loop containing nucleoside triphosphate hydrolases"/>
    <property type="match status" value="1"/>
</dbReference>
<dbReference type="PROSITE" id="PS50893">
    <property type="entry name" value="ABC_TRANSPORTER_2"/>
    <property type="match status" value="1"/>
</dbReference>
<accession>Q9LZ98</accession>
<sequence length="328" mass="36922">MAVTEEEKKRNSTVEISGLRFTYPGIDGHPPPGSKPLIEDFSITLNSSDRCLLVGSNGAGKTTILKILGGKHMVEPHMVRVLGRSAFHDTGLTSSGDLCYLGGEWRRDVAFAGFEVPIQMDISAEKMIFGVAGIDPQRRDELIKVLDIDISWRLHKVSDGQRRRVQICMGLLKPFKVLLLDEITVDLDVLARADLLKFLRKECEERGATIIYATHIFDGLEDWPTHIVYVANGKLQLALPMEKVKETSKKSLMRTVESWLRKERDEERKRRKERKANGLPEFETRTEESRVTGDPARMLNNGWAAGRLHSTVAGGEDNFVLSSNRVLR</sequence>
<protein>
    <recommendedName>
        <fullName>ABC transporter I family member 20</fullName>
        <shortName>ABC transporter ABCI.20</shortName>
        <shortName>AtABCI20</shortName>
    </recommendedName>
    <alternativeName>
        <fullName>GCN-related protein 3</fullName>
    </alternativeName>
    <alternativeName>
        <fullName>Non-intrinsic ABC protein 9</fullName>
    </alternativeName>
</protein>
<keyword id="KW-0025">Alternative splicing</keyword>
<keyword id="KW-0067">ATP-binding</keyword>
<keyword id="KW-0963">Cytoplasm</keyword>
<keyword id="KW-0547">Nucleotide-binding</keyword>
<keyword id="KW-1185">Reference proteome</keyword>
<keyword id="KW-0813">Transport</keyword>
<gene>
    <name type="primary">ABCI20</name>
    <name type="synonym">NAP9</name>
    <name type="ordered locus">At5g02270</name>
    <name type="ORF">T1E22.30</name>
</gene>
<feature type="chain" id="PRO_0000250661" description="ABC transporter I family member 20">
    <location>
        <begin position="1"/>
        <end position="328"/>
    </location>
</feature>
<feature type="domain" description="ABC transporter" evidence="1">
    <location>
        <begin position="14"/>
        <end position="257"/>
    </location>
</feature>
<feature type="region of interest" description="Disordered" evidence="2">
    <location>
        <begin position="263"/>
        <end position="295"/>
    </location>
</feature>
<feature type="compositionally biased region" description="Basic and acidic residues" evidence="2">
    <location>
        <begin position="282"/>
        <end position="291"/>
    </location>
</feature>
<feature type="binding site" evidence="1">
    <location>
        <begin position="55"/>
        <end position="62"/>
    </location>
    <ligand>
        <name>ATP</name>
        <dbReference type="ChEBI" id="CHEBI:30616"/>
    </ligand>
</feature>
<proteinExistence type="evidence at transcript level"/>
<organism>
    <name type="scientific">Arabidopsis thaliana</name>
    <name type="common">Mouse-ear cress</name>
    <dbReference type="NCBI Taxonomy" id="3702"/>
    <lineage>
        <taxon>Eukaryota</taxon>
        <taxon>Viridiplantae</taxon>
        <taxon>Streptophyta</taxon>
        <taxon>Embryophyta</taxon>
        <taxon>Tracheophyta</taxon>
        <taxon>Spermatophyta</taxon>
        <taxon>Magnoliopsida</taxon>
        <taxon>eudicotyledons</taxon>
        <taxon>Gunneridae</taxon>
        <taxon>Pentapetalae</taxon>
        <taxon>rosids</taxon>
        <taxon>malvids</taxon>
        <taxon>Brassicales</taxon>
        <taxon>Brassicaceae</taxon>
        <taxon>Camelineae</taxon>
        <taxon>Arabidopsis</taxon>
    </lineage>
</organism>
<reference key="1">
    <citation type="journal article" date="2000" name="Nature">
        <title>Sequence and analysis of chromosome 5 of the plant Arabidopsis thaliana.</title>
        <authorList>
            <person name="Tabata S."/>
            <person name="Kaneko T."/>
            <person name="Nakamura Y."/>
            <person name="Kotani H."/>
            <person name="Kato T."/>
            <person name="Asamizu E."/>
            <person name="Miyajima N."/>
            <person name="Sasamoto S."/>
            <person name="Kimura T."/>
            <person name="Hosouchi T."/>
            <person name="Kawashima K."/>
            <person name="Kohara M."/>
            <person name="Matsumoto M."/>
            <person name="Matsuno A."/>
            <person name="Muraki A."/>
            <person name="Nakayama S."/>
            <person name="Nakazaki N."/>
            <person name="Naruo K."/>
            <person name="Okumura S."/>
            <person name="Shinpo S."/>
            <person name="Takeuchi C."/>
            <person name="Wada T."/>
            <person name="Watanabe A."/>
            <person name="Yamada M."/>
            <person name="Yasuda M."/>
            <person name="Sato S."/>
            <person name="de la Bastide M."/>
            <person name="Huang E."/>
            <person name="Spiegel L."/>
            <person name="Gnoj L."/>
            <person name="O'Shaughnessy A."/>
            <person name="Preston R."/>
            <person name="Habermann K."/>
            <person name="Murray J."/>
            <person name="Johnson D."/>
            <person name="Rohlfing T."/>
            <person name="Nelson J."/>
            <person name="Stoneking T."/>
            <person name="Pepin K."/>
            <person name="Spieth J."/>
            <person name="Sekhon M."/>
            <person name="Armstrong J."/>
            <person name="Becker M."/>
            <person name="Belter E."/>
            <person name="Cordum H."/>
            <person name="Cordes M."/>
            <person name="Courtney L."/>
            <person name="Courtney W."/>
            <person name="Dante M."/>
            <person name="Du H."/>
            <person name="Edwards J."/>
            <person name="Fryman J."/>
            <person name="Haakensen B."/>
            <person name="Lamar E."/>
            <person name="Latreille P."/>
            <person name="Leonard S."/>
            <person name="Meyer R."/>
            <person name="Mulvaney E."/>
            <person name="Ozersky P."/>
            <person name="Riley A."/>
            <person name="Strowmatt C."/>
            <person name="Wagner-McPherson C."/>
            <person name="Wollam A."/>
            <person name="Yoakum M."/>
            <person name="Bell M."/>
            <person name="Dedhia N."/>
            <person name="Parnell L."/>
            <person name="Shah R."/>
            <person name="Rodriguez M."/>
            <person name="Hoon See L."/>
            <person name="Vil D."/>
            <person name="Baker J."/>
            <person name="Kirchoff K."/>
            <person name="Toth K."/>
            <person name="King L."/>
            <person name="Bahret A."/>
            <person name="Miller B."/>
            <person name="Marra M.A."/>
            <person name="Martienssen R."/>
            <person name="McCombie W.R."/>
            <person name="Wilson R.K."/>
            <person name="Murphy G."/>
            <person name="Bancroft I."/>
            <person name="Volckaert G."/>
            <person name="Wambutt R."/>
            <person name="Duesterhoeft A."/>
            <person name="Stiekema W."/>
            <person name="Pohl T."/>
            <person name="Entian K.-D."/>
            <person name="Terryn N."/>
            <person name="Hartley N."/>
            <person name="Bent E."/>
            <person name="Johnson S."/>
            <person name="Langham S.-A."/>
            <person name="McCullagh B."/>
            <person name="Robben J."/>
            <person name="Grymonprez B."/>
            <person name="Zimmermann W."/>
            <person name="Ramsperger U."/>
            <person name="Wedler H."/>
            <person name="Balke K."/>
            <person name="Wedler E."/>
            <person name="Peters S."/>
            <person name="van Staveren M."/>
            <person name="Dirkse W."/>
            <person name="Mooijman P."/>
            <person name="Klein Lankhorst R."/>
            <person name="Weitzenegger T."/>
            <person name="Bothe G."/>
            <person name="Rose M."/>
            <person name="Hauf J."/>
            <person name="Berneiser S."/>
            <person name="Hempel S."/>
            <person name="Feldpausch M."/>
            <person name="Lamberth S."/>
            <person name="Villarroel R."/>
            <person name="Gielen J."/>
            <person name="Ardiles W."/>
            <person name="Bents O."/>
            <person name="Lemcke K."/>
            <person name="Kolesov G."/>
            <person name="Mayer K.F.X."/>
            <person name="Rudd S."/>
            <person name="Schoof H."/>
            <person name="Schueller C."/>
            <person name="Zaccaria P."/>
            <person name="Mewes H.-W."/>
            <person name="Bevan M."/>
            <person name="Fransz P.F."/>
        </authorList>
    </citation>
    <scope>NUCLEOTIDE SEQUENCE [LARGE SCALE GENOMIC DNA]</scope>
    <source>
        <strain>cv. Columbia</strain>
    </source>
</reference>
<reference key="2">
    <citation type="journal article" date="2017" name="Plant J.">
        <title>Araport11: a complete reannotation of the Arabidopsis thaliana reference genome.</title>
        <authorList>
            <person name="Cheng C.Y."/>
            <person name="Krishnakumar V."/>
            <person name="Chan A.P."/>
            <person name="Thibaud-Nissen F."/>
            <person name="Schobel S."/>
            <person name="Town C.D."/>
        </authorList>
    </citation>
    <scope>GENOME REANNOTATION</scope>
    <source>
        <strain>cv. Columbia</strain>
    </source>
</reference>
<reference key="3">
    <citation type="journal article" date="2003" name="Science">
        <title>Empirical analysis of transcriptional activity in the Arabidopsis genome.</title>
        <authorList>
            <person name="Yamada K."/>
            <person name="Lim J."/>
            <person name="Dale J.M."/>
            <person name="Chen H."/>
            <person name="Shinn P."/>
            <person name="Palm C.J."/>
            <person name="Southwick A.M."/>
            <person name="Wu H.C."/>
            <person name="Kim C.J."/>
            <person name="Nguyen M."/>
            <person name="Pham P.K."/>
            <person name="Cheuk R.F."/>
            <person name="Karlin-Newmann G."/>
            <person name="Liu S.X."/>
            <person name="Lam B."/>
            <person name="Sakano H."/>
            <person name="Wu T."/>
            <person name="Yu G."/>
            <person name="Miranda M."/>
            <person name="Quach H.L."/>
            <person name="Tripp M."/>
            <person name="Chang C.H."/>
            <person name="Lee J.M."/>
            <person name="Toriumi M.J."/>
            <person name="Chan M.M."/>
            <person name="Tang C.C."/>
            <person name="Onodera C.S."/>
            <person name="Deng J.M."/>
            <person name="Akiyama K."/>
            <person name="Ansari Y."/>
            <person name="Arakawa T."/>
            <person name="Banh J."/>
            <person name="Banno F."/>
            <person name="Bowser L."/>
            <person name="Brooks S.Y."/>
            <person name="Carninci P."/>
            <person name="Chao Q."/>
            <person name="Choy N."/>
            <person name="Enju A."/>
            <person name="Goldsmith A.D."/>
            <person name="Gurjal M."/>
            <person name="Hansen N.F."/>
            <person name="Hayashizaki Y."/>
            <person name="Johnson-Hopson C."/>
            <person name="Hsuan V.W."/>
            <person name="Iida K."/>
            <person name="Karnes M."/>
            <person name="Khan S."/>
            <person name="Koesema E."/>
            <person name="Ishida J."/>
            <person name="Jiang P.X."/>
            <person name="Jones T."/>
            <person name="Kawai J."/>
            <person name="Kamiya A."/>
            <person name="Meyers C."/>
            <person name="Nakajima M."/>
            <person name="Narusaka M."/>
            <person name="Seki M."/>
            <person name="Sakurai T."/>
            <person name="Satou M."/>
            <person name="Tamse R."/>
            <person name="Vaysberg M."/>
            <person name="Wallender E.K."/>
            <person name="Wong C."/>
            <person name="Yamamura Y."/>
            <person name="Yuan S."/>
            <person name="Shinozaki K."/>
            <person name="Davis R.W."/>
            <person name="Theologis A."/>
            <person name="Ecker J.R."/>
        </authorList>
    </citation>
    <scope>NUCLEOTIDE SEQUENCE [LARGE SCALE MRNA]</scope>
    <source>
        <strain>cv. Columbia</strain>
    </source>
</reference>
<reference key="4">
    <citation type="submission" date="2002-03" db="EMBL/GenBank/DDBJ databases">
        <title>Full-length cDNA from Arabidopsis thaliana.</title>
        <authorList>
            <person name="Brover V.V."/>
            <person name="Troukhan M.E."/>
            <person name="Alexandrov N.A."/>
            <person name="Lu Y.-P."/>
            <person name="Flavell R.B."/>
            <person name="Feldmann K.A."/>
        </authorList>
    </citation>
    <scope>NUCLEOTIDE SEQUENCE [LARGE SCALE MRNA]</scope>
</reference>
<reference key="5">
    <citation type="journal article" date="2001" name="J. Biol. Chem.">
        <title>The Arabidopsis thaliana ABC protein superfamily, a complete inventory.</title>
        <authorList>
            <person name="Sanchez-Fernandez R."/>
            <person name="Davies T.G."/>
            <person name="Coleman J.O."/>
            <person name="Rea P.A."/>
        </authorList>
    </citation>
    <scope>GENE FAMILY</scope>
    <scope>NOMENCLATURE</scope>
</reference>
<reference key="6">
    <citation type="journal article" date="2006" name="Plant Sci.">
        <title>Molecular characterization of three Arabidopsis soluble ABC proteins which expression is induced by sugars.</title>
        <authorList>
            <person name="Marin E."/>
            <person name="Divol F."/>
            <person name="Bechtold N."/>
            <person name="Vavasseur A."/>
            <person name="Nussaume L."/>
            <person name="Forestier C."/>
        </authorList>
        <dbReference type="AGRICOLA" id="IND43814144"/>
    </citation>
    <scope>INDUCTION</scope>
    <scope>SUBCELLULAR LOCATION</scope>
    <source>
        <strain>cv. Wassilewskija</strain>
    </source>
</reference>
<reference key="7">
    <citation type="journal article" date="2008" name="Trends Plant Sci.">
        <title>Plant ABC proteins - a unified nomenclature and updated inventory.</title>
        <authorList>
            <person name="Verrier P.J."/>
            <person name="Bird D."/>
            <person name="Burla B."/>
            <person name="Dassa E."/>
            <person name="Forestier C."/>
            <person name="Geisler M."/>
            <person name="Klein M."/>
            <person name="Kolukisaoglu H.U."/>
            <person name="Lee Y."/>
            <person name="Martinoia E."/>
            <person name="Murphy A."/>
            <person name="Rea P.A."/>
            <person name="Samuels L."/>
            <person name="Schulz B."/>
            <person name="Spalding E.J."/>
            <person name="Yazaki K."/>
            <person name="Theodoulou F.L."/>
        </authorList>
    </citation>
    <scope>GENE FAMILY</scope>
    <scope>NOMENCLATURE</scope>
</reference>
<name>AB20I_ARATH</name>